<proteinExistence type="evidence at protein level"/>
<feature type="signal peptide" evidence="1">
    <location>
        <begin position="1"/>
        <end position="20"/>
    </location>
</feature>
<feature type="chain" id="PRO_0000382767" description="Spore wall protein ECU02_0150">
    <location>
        <begin position="21"/>
        <end position="220"/>
    </location>
</feature>
<feature type="glycosylation site" description="N-linked (GlcNAc...) asparagine" evidence="1">
    <location>
        <position position="83"/>
    </location>
</feature>
<reference key="1">
    <citation type="journal article" date="2001" name="Nature">
        <title>Genome sequence and gene compaction of the eukaryote parasite Encephalitozoon cuniculi.</title>
        <authorList>
            <person name="Katinka M.D."/>
            <person name="Duprat S."/>
            <person name="Cornillot E."/>
            <person name="Metenier G."/>
            <person name="Thomarat F."/>
            <person name="Prensier G."/>
            <person name="Barbe V."/>
            <person name="Peyretaillade E."/>
            <person name="Brottier P."/>
            <person name="Wincker P."/>
            <person name="Delbac F."/>
            <person name="El Alaoui H."/>
            <person name="Peyret P."/>
            <person name="Saurin W."/>
            <person name="Gouy M."/>
            <person name="Weissenbach J."/>
            <person name="Vivares C.P."/>
        </authorList>
    </citation>
    <scope>NUCLEOTIDE SEQUENCE [LARGE SCALE GENOMIC DNA]</scope>
    <source>
        <strain>GB-M1</strain>
    </source>
</reference>
<reference key="2">
    <citation type="journal article" date="2006" name="Proteomics">
        <title>Proteomic analysis of the eukaryotic parasite Encephalitozoon cuniculi (microsporidia): a reference map for proteins expressed in late sporogonial stages.</title>
        <authorList>
            <person name="Brosson D."/>
            <person name="Kuhn L."/>
            <person name="Delbac F."/>
            <person name="Garin J."/>
            <person name="Vivares C.P."/>
            <person name="Texier C."/>
        </authorList>
    </citation>
    <scope>IDENTIFICATION BY MASS SPECTROMETRY [LARGE SCALE ANALYSIS]</scope>
    <scope>DEVELOPMENTAL STAGE</scope>
    <scope>SUBCELLULAR LOCATION</scope>
</reference>
<protein>
    <recommendedName>
        <fullName>Spore wall protein ECU02_0150</fullName>
    </recommendedName>
</protein>
<comment type="subcellular location">
    <subcellularLocation>
        <location evidence="2">Spore wall</location>
    </subcellularLocation>
</comment>
<comment type="developmental stage">
    <text evidence="2">Expressed in late sporogonial stages.</text>
</comment>
<evidence type="ECO:0000255" key="1"/>
<evidence type="ECO:0000269" key="2">
    <source>
    </source>
</evidence>
<organism>
    <name type="scientific">Encephalitozoon cuniculi (strain GB-M1)</name>
    <name type="common">Microsporidian parasite</name>
    <dbReference type="NCBI Taxonomy" id="284813"/>
    <lineage>
        <taxon>Eukaryota</taxon>
        <taxon>Fungi</taxon>
        <taxon>Fungi incertae sedis</taxon>
        <taxon>Microsporidia</taxon>
        <taxon>Unikaryonidae</taxon>
        <taxon>Encephalitozoon</taxon>
    </lineage>
</organism>
<name>Y215_ENCCU</name>
<keyword id="KW-0325">Glycoprotein</keyword>
<keyword id="KW-1185">Reference proteome</keyword>
<keyword id="KW-0732">Signal</keyword>
<keyword id="KW-0749">Sporulation</keyword>
<accession>Q8SWG8</accession>
<dbReference type="EMBL" id="AL590442">
    <property type="protein sequence ID" value="CAD25046.1"/>
    <property type="molecule type" value="Genomic_DNA"/>
</dbReference>
<dbReference type="RefSeq" id="NP_584542.1">
    <property type="nucleotide sequence ID" value="NM_001040731.1"/>
</dbReference>
<dbReference type="SMR" id="Q8SWG8"/>
<dbReference type="GeneID" id="858532"/>
<dbReference type="KEGG" id="ecu:ECU02_0150"/>
<dbReference type="VEuPathDB" id="MicrosporidiaDB:ECU02_0150"/>
<dbReference type="HOGENOM" id="CLU_1255984_0_0_1"/>
<dbReference type="InParanoid" id="Q8SWG8"/>
<dbReference type="OrthoDB" id="2186354at2759"/>
<dbReference type="Proteomes" id="UP000000819">
    <property type="component" value="Chromosome II"/>
</dbReference>
<dbReference type="GO" id="GO:0031160">
    <property type="term" value="C:spore wall"/>
    <property type="evidence" value="ECO:0007669"/>
    <property type="project" value="UniProtKB-SubCell"/>
</dbReference>
<dbReference type="GO" id="GO:0030435">
    <property type="term" value="P:sporulation resulting in formation of a cellular spore"/>
    <property type="evidence" value="ECO:0007669"/>
    <property type="project" value="UniProtKB-KW"/>
</dbReference>
<dbReference type="InterPro" id="IPR031513">
    <property type="entry name" value="MICSWaP"/>
</dbReference>
<dbReference type="Pfam" id="PF17018">
    <property type="entry name" value="MICSWaP"/>
    <property type="match status" value="1"/>
</dbReference>
<gene>
    <name type="ordered locus">ECU02_0150</name>
</gene>
<sequence>MFGSKYLLILLAGLVICSQAIGIRRIPVEVYVSEAGRKKFLDKGRSIEDIVGSVAEELELKMNEHVYADRASTDKRKFHFDWNVSGMTSSEIDLDKCGKDTNRFQYDLVQAARDKAGVSVILLYTCESEGYSEDFILAGQKTPLVIQRKYPECSNDVATFTETEPMKIESIIANALFITAGSPLNDMVEFEEVDNGRDGFKRDIRLKTTDFSLFSGGVCH</sequence>